<sequence>MAENDAKPTLPKKSGPYISSVTSHGMNLVIRGIVLFFIGVFLALVLNLLQIQRNVTLFPPDVITSIFSSAWWVPPCCGTASAVIGLLYPCMDRHLGEPHKFKREWSSVMRCVAVFVGINHASAKVDFANNIQLSLTLAALSIGLWWTFDRSRSGFGLGVGIAFLATLVSQLLVYNGVYQYTSPDFLYVRSWLPCIFFAGGITMGNIGRQLAMYECKVIAEKSHED</sequence>
<gene>
    <name evidence="2" type="primary">INSIG2</name>
    <name evidence="3" type="ORF">RCJMB04_5j21</name>
</gene>
<organism>
    <name type="scientific">Gallus gallus</name>
    <name type="common">Chicken</name>
    <dbReference type="NCBI Taxonomy" id="9031"/>
    <lineage>
        <taxon>Eukaryota</taxon>
        <taxon>Metazoa</taxon>
        <taxon>Chordata</taxon>
        <taxon>Craniata</taxon>
        <taxon>Vertebrata</taxon>
        <taxon>Euteleostomi</taxon>
        <taxon>Archelosauria</taxon>
        <taxon>Archosauria</taxon>
        <taxon>Dinosauria</taxon>
        <taxon>Saurischia</taxon>
        <taxon>Theropoda</taxon>
        <taxon>Coelurosauria</taxon>
        <taxon>Aves</taxon>
        <taxon>Neognathae</taxon>
        <taxon>Galloanserae</taxon>
        <taxon>Galliformes</taxon>
        <taxon>Phasianidae</taxon>
        <taxon>Phasianinae</taxon>
        <taxon>Gallus</taxon>
    </lineage>
</organism>
<dbReference type="EMBL" id="AJ851538">
    <property type="protein sequence ID" value="CAH65172.1"/>
    <property type="molecule type" value="mRNA"/>
</dbReference>
<dbReference type="EMBL" id="AC161466">
    <property type="status" value="NOT_ANNOTATED_CDS"/>
    <property type="molecule type" value="Genomic_DNA"/>
</dbReference>
<dbReference type="RefSeq" id="NP_001292394.1">
    <property type="nucleotide sequence ID" value="NM_001305465.1"/>
</dbReference>
<dbReference type="RefSeq" id="XP_015145311.1">
    <property type="nucleotide sequence ID" value="XM_015289825.1"/>
</dbReference>
<dbReference type="SMR" id="Q5F3W2"/>
<dbReference type="FunCoup" id="Q5F3W2">
    <property type="interactions" value="18"/>
</dbReference>
<dbReference type="STRING" id="9031.ENSGALP00000042579"/>
<dbReference type="PaxDb" id="9031-ENSGALP00000042579"/>
<dbReference type="GeneID" id="424276"/>
<dbReference type="KEGG" id="gga:424276"/>
<dbReference type="CTD" id="51141"/>
<dbReference type="VEuPathDB" id="HostDB:geneid_424276"/>
<dbReference type="eggNOG" id="KOG4363">
    <property type="taxonomic scope" value="Eukaryota"/>
</dbReference>
<dbReference type="HOGENOM" id="CLU_092922_0_0_1"/>
<dbReference type="InParanoid" id="Q5F3W2"/>
<dbReference type="OrthoDB" id="205546at2759"/>
<dbReference type="PhylomeDB" id="Q5F3W2"/>
<dbReference type="PRO" id="PR:Q5F3W2"/>
<dbReference type="Proteomes" id="UP000000539">
    <property type="component" value="Chromosome 7"/>
</dbReference>
<dbReference type="Bgee" id="ENSGALG00000028046">
    <property type="expression patterns" value="Expressed in kidney and 13 other cell types or tissues"/>
</dbReference>
<dbReference type="GO" id="GO:0005783">
    <property type="term" value="C:endoplasmic reticulum"/>
    <property type="evidence" value="ECO:0000318"/>
    <property type="project" value="GO_Central"/>
</dbReference>
<dbReference type="GO" id="GO:0032937">
    <property type="term" value="C:SREBP-SCAP-Insig complex"/>
    <property type="evidence" value="ECO:0000318"/>
    <property type="project" value="GO_Central"/>
</dbReference>
<dbReference type="GO" id="GO:0008142">
    <property type="term" value="F:oxysterol binding"/>
    <property type="evidence" value="ECO:0000250"/>
    <property type="project" value="UniProtKB"/>
</dbReference>
<dbReference type="GO" id="GO:0032869">
    <property type="term" value="P:cellular response to insulin stimulus"/>
    <property type="evidence" value="ECO:0000318"/>
    <property type="project" value="GO_Central"/>
</dbReference>
<dbReference type="GO" id="GO:0006695">
    <property type="term" value="P:cholesterol biosynthetic process"/>
    <property type="evidence" value="ECO:0000250"/>
    <property type="project" value="UniProtKB"/>
</dbReference>
<dbReference type="GO" id="GO:0032933">
    <property type="term" value="P:SREBP signaling pathway"/>
    <property type="evidence" value="ECO:0000250"/>
    <property type="project" value="UniProtKB"/>
</dbReference>
<dbReference type="GO" id="GO:0036316">
    <property type="term" value="P:SREBP-SCAP complex retention in endoplasmic reticulum"/>
    <property type="evidence" value="ECO:0000250"/>
    <property type="project" value="UniProtKB"/>
</dbReference>
<dbReference type="InterPro" id="IPR025929">
    <property type="entry name" value="INSIG_fam"/>
</dbReference>
<dbReference type="PANTHER" id="PTHR15301">
    <property type="entry name" value="INSULIN-INDUCED GENE 1"/>
    <property type="match status" value="1"/>
</dbReference>
<dbReference type="PANTHER" id="PTHR15301:SF10">
    <property type="entry name" value="INSULIN-INDUCED GENE 2 PROTEIN"/>
    <property type="match status" value="1"/>
</dbReference>
<dbReference type="Pfam" id="PF07281">
    <property type="entry name" value="INSIG"/>
    <property type="match status" value="1"/>
</dbReference>
<keyword id="KW-0025">Alternative splicing</keyword>
<keyword id="KW-0153">Cholesterol metabolism</keyword>
<keyword id="KW-0256">Endoplasmic reticulum</keyword>
<keyword id="KW-0443">Lipid metabolism</keyword>
<keyword id="KW-0446">Lipid-binding</keyword>
<keyword id="KW-0472">Membrane</keyword>
<keyword id="KW-1185">Reference proteome</keyword>
<keyword id="KW-0753">Steroid metabolism</keyword>
<keyword id="KW-1207">Sterol metabolism</keyword>
<keyword id="KW-0812">Transmembrane</keyword>
<keyword id="KW-1133">Transmembrane helix</keyword>
<name>INSI2_CHICK</name>
<feature type="chain" id="PRO_0000286802" description="Insulin-induced gene 2 protein">
    <location>
        <begin position="1"/>
        <end position="225"/>
    </location>
</feature>
<feature type="topological domain" description="Cytoplasmic" evidence="4">
    <location>
        <begin position="1"/>
        <end position="28"/>
    </location>
</feature>
<feature type="transmembrane region" description="Helical; Name=1" evidence="1">
    <location>
        <begin position="29"/>
        <end position="51"/>
    </location>
</feature>
<feature type="topological domain" description="Lumenal" evidence="4">
    <location>
        <begin position="52"/>
        <end position="70"/>
    </location>
</feature>
<feature type="transmembrane region" description="Helical; Name=2" evidence="1">
    <location>
        <begin position="71"/>
        <end position="88"/>
    </location>
</feature>
<feature type="topological domain" description="Cytoplasmic" evidence="4">
    <location>
        <begin position="89"/>
        <end position="103"/>
    </location>
</feature>
<feature type="transmembrane region" description="Helical; Name=3" evidence="1">
    <location>
        <begin position="104"/>
        <end position="126"/>
    </location>
</feature>
<feature type="topological domain" description="Lumenal" evidence="4">
    <location>
        <begin position="127"/>
        <end position="129"/>
    </location>
</feature>
<feature type="transmembrane region" description="Helical; Name=4" evidence="1">
    <location>
        <begin position="130"/>
        <end position="148"/>
    </location>
</feature>
<feature type="topological domain" description="Cytoplasmic" evidence="4">
    <location>
        <begin position="149"/>
        <end position="153"/>
    </location>
</feature>
<feature type="transmembrane region" description="Helical; Name=5" evidence="1">
    <location>
        <begin position="154"/>
        <end position="175"/>
    </location>
</feature>
<feature type="topological domain" description="Lumenal" evidence="4">
    <location>
        <begin position="176"/>
        <end position="189"/>
    </location>
</feature>
<feature type="transmembrane region" description="Helical; Name=6" evidence="1">
    <location>
        <begin position="190"/>
        <end position="207"/>
    </location>
</feature>
<feature type="topological domain" description="Cytoplasmic" evidence="4">
    <location>
        <begin position="208"/>
        <end position="225"/>
    </location>
</feature>
<feature type="short sequence motif" description="KxHxx" evidence="2">
    <location>
        <begin position="219"/>
        <end position="225"/>
    </location>
</feature>
<feature type="site" description="Required for the recognition of 25-hydroxycholesterol" evidence="2">
    <location>
        <position position="115"/>
    </location>
</feature>
<feature type="splice variant" id="VSP_060672" description="In isoform 2.">
    <original>QIQRNVTLFPPDVITSIFSSAWWVPPCCGTASAVIGLLYPCMDRHLGEPHKFKREWSSVMRCVAVFV</original>
    <variation>NAVCSGLCQ</variation>
    <location>
        <begin position="50"/>
        <end position="116"/>
    </location>
</feature>
<feature type="sequence conflict" description="In Ref. 1; CAH65172." evidence="4" ref="1">
    <original>H</original>
    <variation>R</variation>
    <location>
        <position position="24"/>
    </location>
</feature>
<feature type="sequence conflict" description="In Ref. 1; CAH65172." evidence="4" ref="1">
    <original>L</original>
    <variation>I</variation>
    <location>
        <position position="186"/>
    </location>
</feature>
<proteinExistence type="evidence at transcript level"/>
<comment type="function">
    <text evidence="2">Oxysterol-binding protein that mediates feedback control of cholesterol synthesis by controlling both endoplasmic reticulum to Golgi transport of SCAP and degradation of HMGCR. Acts as a negative regulator of cholesterol biosynthesis by mediating the retention of the SCAP-SREBP complex in the endoplasmic reticulum, thereby blocking the processing of sterol regulatory element-binding proteins (SREBPs). Binds oxysterol, including 22-hydroxycholesterol, 24-hydroxycholesterol, 25-hydroxycholesterol and 27-hydroxycholesterol, regulating interaction with SCAP and retention of the SCAP-SREBP complex in the endoplasmic reticulum. In presence of oxysterol, interacts with SCAP, retaining the SCAP-SREBP complex in the endoplasmic reticulum, thereby preventing SCAP from escorting SREBPs to the Golgi. Sterol deprivation reduces oxysterol-binding, disrupting the interaction between INSIG2 and SCAP, thereby promoting Golgi transport of the SCAP-SREBP complex, followed by processing and nuclear translocation of SREBPs. Also regulates cholesterol synthesis by regulating degradation of HMGCR.</text>
</comment>
<comment type="subunit">
    <text evidence="2">Interacts with SCAP; interaction is direct and only takes place in the presence of sterols; it prevents interaction between SCAP and the coat protein complex II (COPII). Associates with the SCAP-SREBP complex; association is mediated via its interaction with SCAP and only takes place in the presence of sterols.</text>
</comment>
<comment type="subcellular location">
    <subcellularLocation>
        <location evidence="2">Endoplasmic reticulum membrane</location>
        <topology evidence="2">Multi-pass membrane protein</topology>
    </subcellularLocation>
</comment>
<comment type="alternative products">
    <event type="alternative splicing"/>
    <isoform>
        <id>Q5F3W2-1</id>
        <name>1</name>
        <sequence type="displayed"/>
    </isoform>
    <isoform>
        <id>Q5F3W2-2</id>
        <name>2</name>
        <sequence type="described" ref="VSP_060672"/>
    </isoform>
</comment>
<comment type="domain">
    <text evidence="2">Binds oxysterols in a pocket within their transmembrane domains and interacts with SCAP via transmembrane domains 3 and 4.</text>
</comment>
<comment type="domain">
    <text evidence="2">The KxHxx motif mediates association with the coatomer complex.</text>
</comment>
<comment type="similarity">
    <text evidence="4">Belongs to the INSIG family.</text>
</comment>
<evidence type="ECO:0000250" key="1">
    <source>
        <dbReference type="UniProtKB" id="A1T557"/>
    </source>
</evidence>
<evidence type="ECO:0000250" key="2">
    <source>
        <dbReference type="UniProtKB" id="Q9Y5U4"/>
    </source>
</evidence>
<evidence type="ECO:0000303" key="3">
    <source>
    </source>
</evidence>
<evidence type="ECO:0000305" key="4"/>
<protein>
    <recommendedName>
        <fullName evidence="2">Insulin-induced gene 2 protein</fullName>
        <shortName evidence="2">INSIG-2</shortName>
    </recommendedName>
</protein>
<accession>Q5F3W2</accession>
<accession>R4GK90</accession>
<reference key="1">
    <citation type="journal article" date="2005" name="Genome Biol.">
        <title>Full-length cDNAs from chicken bursal lymphocytes to facilitate gene function analysis.</title>
        <authorList>
            <person name="Caldwell R.B."/>
            <person name="Kierzek A.M."/>
            <person name="Arakawa H."/>
            <person name="Bezzubov Y."/>
            <person name="Zaim J."/>
            <person name="Fiedler P."/>
            <person name="Kutter S."/>
            <person name="Blagodatski A."/>
            <person name="Kostovska D."/>
            <person name="Koter M."/>
            <person name="Plachy J."/>
            <person name="Carninci P."/>
            <person name="Hayashizaki Y."/>
            <person name="Buerstedde J.-M."/>
        </authorList>
    </citation>
    <scope>NUCLEOTIDE SEQUENCE [LARGE SCALE MRNA] (ISOFORM 2)</scope>
    <source>
        <strain>CB</strain>
        <tissue>Bursa of Fabricius</tissue>
    </source>
</reference>
<reference key="2">
    <citation type="journal article" date="2004" name="Nature">
        <title>Sequence and comparative analysis of the chicken genome provide unique perspectives on vertebrate evolution.</title>
        <authorList>
            <person name="Hillier L.W."/>
            <person name="Miller W."/>
            <person name="Birney E."/>
            <person name="Warren W."/>
            <person name="Hardison R.C."/>
            <person name="Ponting C.P."/>
            <person name="Bork P."/>
            <person name="Burt D.W."/>
            <person name="Groenen M.A.M."/>
            <person name="Delany M.E."/>
            <person name="Dodgson J.B."/>
            <person name="Chinwalla A.T."/>
            <person name="Cliften P.F."/>
            <person name="Clifton S.W."/>
            <person name="Delehaunty K.D."/>
            <person name="Fronick C."/>
            <person name="Fulton R.S."/>
            <person name="Graves T.A."/>
            <person name="Kremitzki C."/>
            <person name="Layman D."/>
            <person name="Magrini V."/>
            <person name="McPherson J.D."/>
            <person name="Miner T.L."/>
            <person name="Minx P."/>
            <person name="Nash W.E."/>
            <person name="Nhan M.N."/>
            <person name="Nelson J.O."/>
            <person name="Oddy L.G."/>
            <person name="Pohl C.S."/>
            <person name="Randall-Maher J."/>
            <person name="Smith S.M."/>
            <person name="Wallis J.W."/>
            <person name="Yang S.-P."/>
            <person name="Romanov M.N."/>
            <person name="Rondelli C.M."/>
            <person name="Paton B."/>
            <person name="Smith J."/>
            <person name="Morrice D."/>
            <person name="Daniels L."/>
            <person name="Tempest H.G."/>
            <person name="Robertson L."/>
            <person name="Masabanda J.S."/>
            <person name="Griffin D.K."/>
            <person name="Vignal A."/>
            <person name="Fillon V."/>
            <person name="Jacobbson L."/>
            <person name="Kerje S."/>
            <person name="Andersson L."/>
            <person name="Crooijmans R.P."/>
            <person name="Aerts J."/>
            <person name="van der Poel J.J."/>
            <person name="Ellegren H."/>
            <person name="Caldwell R.B."/>
            <person name="Hubbard S.J."/>
            <person name="Grafham D.V."/>
            <person name="Kierzek A.M."/>
            <person name="McLaren S.R."/>
            <person name="Overton I.M."/>
            <person name="Arakawa H."/>
            <person name="Beattie K.J."/>
            <person name="Bezzubov Y."/>
            <person name="Boardman P.E."/>
            <person name="Bonfield J.K."/>
            <person name="Croning M.D.R."/>
            <person name="Davies R.M."/>
            <person name="Francis M.D."/>
            <person name="Humphray S.J."/>
            <person name="Scott C.E."/>
            <person name="Taylor R.G."/>
            <person name="Tickle C."/>
            <person name="Brown W.R.A."/>
            <person name="Rogers J."/>
            <person name="Buerstedde J.-M."/>
            <person name="Wilson S.A."/>
            <person name="Stubbs L."/>
            <person name="Ovcharenko I."/>
            <person name="Gordon L."/>
            <person name="Lucas S."/>
            <person name="Miller M.M."/>
            <person name="Inoko H."/>
            <person name="Shiina T."/>
            <person name="Kaufman J."/>
            <person name="Salomonsen J."/>
            <person name="Skjoedt K."/>
            <person name="Wong G.K.-S."/>
            <person name="Wang J."/>
            <person name="Liu B."/>
            <person name="Wang J."/>
            <person name="Yu J."/>
            <person name="Yang H."/>
            <person name="Nefedov M."/>
            <person name="Koriabine M."/>
            <person name="Dejong P.J."/>
            <person name="Goodstadt L."/>
            <person name="Webber C."/>
            <person name="Dickens N.J."/>
            <person name="Letunic I."/>
            <person name="Suyama M."/>
            <person name="Torrents D."/>
            <person name="von Mering C."/>
            <person name="Zdobnov E.M."/>
            <person name="Makova K."/>
            <person name="Nekrutenko A."/>
            <person name="Elnitski L."/>
            <person name="Eswara P."/>
            <person name="King D.C."/>
            <person name="Yang S.-P."/>
            <person name="Tyekucheva S."/>
            <person name="Radakrishnan A."/>
            <person name="Harris R.S."/>
            <person name="Chiaromonte F."/>
            <person name="Taylor J."/>
            <person name="He J."/>
            <person name="Rijnkels M."/>
            <person name="Griffiths-Jones S."/>
            <person name="Ureta-Vidal A."/>
            <person name="Hoffman M.M."/>
            <person name="Severin J."/>
            <person name="Searle S.M.J."/>
            <person name="Law A.S."/>
            <person name="Speed D."/>
            <person name="Waddington D."/>
            <person name="Cheng Z."/>
            <person name="Tuzun E."/>
            <person name="Eichler E."/>
            <person name="Bao Z."/>
            <person name="Flicek P."/>
            <person name="Shteynberg D.D."/>
            <person name="Brent M.R."/>
            <person name="Bye J.M."/>
            <person name="Huckle E.J."/>
            <person name="Chatterji S."/>
            <person name="Dewey C."/>
            <person name="Pachter L."/>
            <person name="Kouranov A."/>
            <person name="Mourelatos Z."/>
            <person name="Hatzigeorgiou A.G."/>
            <person name="Paterson A.H."/>
            <person name="Ivarie R."/>
            <person name="Brandstrom M."/>
            <person name="Axelsson E."/>
            <person name="Backstrom N."/>
            <person name="Berlin S."/>
            <person name="Webster M.T."/>
            <person name="Pourquie O."/>
            <person name="Reymond A."/>
            <person name="Ucla C."/>
            <person name="Antonarakis S.E."/>
            <person name="Long M."/>
            <person name="Emerson J.J."/>
            <person name="Betran E."/>
            <person name="Dupanloup I."/>
            <person name="Kaessmann H."/>
            <person name="Hinrichs A.S."/>
            <person name="Bejerano G."/>
            <person name="Furey T.S."/>
            <person name="Harte R.A."/>
            <person name="Raney B."/>
            <person name="Siepel A."/>
            <person name="Kent W.J."/>
            <person name="Haussler D."/>
            <person name="Eyras E."/>
            <person name="Castelo R."/>
            <person name="Abril J.F."/>
            <person name="Castellano S."/>
            <person name="Camara F."/>
            <person name="Parra G."/>
            <person name="Guigo R."/>
            <person name="Bourque G."/>
            <person name="Tesler G."/>
            <person name="Pevzner P.A."/>
            <person name="Smit A."/>
            <person name="Fulton L.A."/>
            <person name="Mardis E.R."/>
            <person name="Wilson R.K."/>
        </authorList>
    </citation>
    <scope>NUCLEOTIDE SEQUENCE [LARGE SCALE GENOMIC DNA]</scope>
    <source>
        <strain>Red jungle fowl</strain>
    </source>
</reference>